<keyword id="KW-1017">Isopeptide bond</keyword>
<keyword id="KW-0488">Methylation</keyword>
<keyword id="KW-0539">Nucleus</keyword>
<keyword id="KW-0597">Phosphoprotein</keyword>
<keyword id="KW-1185">Reference proteome</keyword>
<keyword id="KW-0694">RNA-binding</keyword>
<keyword id="KW-0804">Transcription</keyword>
<keyword id="KW-0805">Transcription regulation</keyword>
<keyword id="KW-0832">Ubl conjugation</keyword>
<reference key="1">
    <citation type="journal article" date="1996" name="Proc. Natl. Acad. Sci. U.S.A.">
        <title>The C-terminal domain of the largest subunit of RNA polymerase II interacts with a novel set of serine/arginine-rich proteins.</title>
        <authorList>
            <person name="Yuryev A."/>
            <person name="Patturajan M."/>
            <person name="Litingtung Y."/>
            <person name="Joshi R.V."/>
            <person name="Gentile C."/>
            <person name="Gebara M."/>
            <person name="Corden J.L."/>
        </authorList>
    </citation>
    <scope>NUCLEOTIDE SEQUENCE [MRNA]</scope>
    <scope>INTERACTION WITH POLR2A</scope>
    <source>
        <tissue>Hippocampus</tissue>
    </source>
</reference>
<reference key="2">
    <citation type="journal article" date="1998" name="Mol. Cell. Biol.">
        <title>A nuclear matrix protein interacts with the phosphorylated C-terminal domain of RNA polymerase II.</title>
        <authorList>
            <person name="Patturajan M."/>
            <person name="Wei X."/>
            <person name="Berezney R."/>
            <person name="Corden J.L."/>
        </authorList>
    </citation>
    <scope>INTERACTION WITH POLR2A</scope>
    <scope>SUBCELLULAR LOCATION</scope>
</reference>
<reference key="3">
    <citation type="journal article" date="2012" name="Nat. Commun.">
        <title>Quantitative maps of protein phosphorylation sites across 14 different rat organs and tissues.</title>
        <authorList>
            <person name="Lundby A."/>
            <person name="Secher A."/>
            <person name="Lage K."/>
            <person name="Nordsborg N.B."/>
            <person name="Dmytriyev A."/>
            <person name="Lundby C."/>
            <person name="Olsen J.V."/>
        </authorList>
    </citation>
    <scope>PHOSPHORYLATION [LARGE SCALE ANALYSIS] AT SER-617</scope>
    <scope>IDENTIFICATION BY MASS SPECTROMETRY [LARGE SCALE ANALYSIS]</scope>
</reference>
<organism>
    <name type="scientific">Rattus norvegicus</name>
    <name type="common">Rat</name>
    <dbReference type="NCBI Taxonomy" id="10116"/>
    <lineage>
        <taxon>Eukaryota</taxon>
        <taxon>Metazoa</taxon>
        <taxon>Chordata</taxon>
        <taxon>Craniata</taxon>
        <taxon>Vertebrata</taxon>
        <taxon>Euteleostomi</taxon>
        <taxon>Mammalia</taxon>
        <taxon>Eutheria</taxon>
        <taxon>Euarchontoglires</taxon>
        <taxon>Glires</taxon>
        <taxon>Rodentia</taxon>
        <taxon>Myomorpha</taxon>
        <taxon>Muroidea</taxon>
        <taxon>Muridae</taxon>
        <taxon>Murinae</taxon>
        <taxon>Rattus</taxon>
    </lineage>
</organism>
<name>SCAF8_RAT</name>
<accession>Q63623</accession>
<dbReference type="EMBL" id="U49055">
    <property type="protein sequence ID" value="AAC52656.1"/>
    <property type="molecule type" value="mRNA"/>
</dbReference>
<dbReference type="PIR" id="T31420">
    <property type="entry name" value="T31420"/>
</dbReference>
<dbReference type="RefSeq" id="NP_620794.1">
    <property type="nucleotide sequence ID" value="NM_139094.1"/>
</dbReference>
<dbReference type="SMR" id="Q63623"/>
<dbReference type="FunCoup" id="Q63623">
    <property type="interactions" value="4276"/>
</dbReference>
<dbReference type="STRING" id="10116.ENSRNOP00000062541"/>
<dbReference type="GlyGen" id="Q63623">
    <property type="glycosylation" value="2 sites"/>
</dbReference>
<dbReference type="iPTMnet" id="Q63623"/>
<dbReference type="PhosphoSitePlus" id="Q63623"/>
<dbReference type="jPOST" id="Q63623"/>
<dbReference type="PaxDb" id="10116-ENSRNOP00000062541"/>
<dbReference type="GeneID" id="245926"/>
<dbReference type="KEGG" id="rno:245926"/>
<dbReference type="UCSC" id="RGD:708362">
    <property type="organism name" value="rat"/>
</dbReference>
<dbReference type="AGR" id="RGD:708362"/>
<dbReference type="CTD" id="22828"/>
<dbReference type="RGD" id="708362">
    <property type="gene designation" value="Scaf8"/>
</dbReference>
<dbReference type="eggNOG" id="KOG0132">
    <property type="taxonomic scope" value="Eukaryota"/>
</dbReference>
<dbReference type="InParanoid" id="Q63623"/>
<dbReference type="PhylomeDB" id="Q63623"/>
<dbReference type="PRO" id="PR:Q63623"/>
<dbReference type="Proteomes" id="UP000002494">
    <property type="component" value="Unplaced"/>
</dbReference>
<dbReference type="GO" id="GO:0005737">
    <property type="term" value="C:cytoplasm"/>
    <property type="evidence" value="ECO:0000318"/>
    <property type="project" value="GO_Central"/>
</dbReference>
<dbReference type="GO" id="GO:0005849">
    <property type="term" value="C:mRNA cleavage factor complex"/>
    <property type="evidence" value="ECO:0000318"/>
    <property type="project" value="GO_Central"/>
</dbReference>
<dbReference type="GO" id="GO:0016363">
    <property type="term" value="C:nuclear matrix"/>
    <property type="evidence" value="ECO:0000314"/>
    <property type="project" value="UniProtKB"/>
</dbReference>
<dbReference type="GO" id="GO:0005634">
    <property type="term" value="C:nucleus"/>
    <property type="evidence" value="ECO:0000266"/>
    <property type="project" value="RGD"/>
</dbReference>
<dbReference type="GO" id="GO:0003729">
    <property type="term" value="F:mRNA binding"/>
    <property type="evidence" value="ECO:0000318"/>
    <property type="project" value="GO_Central"/>
</dbReference>
<dbReference type="GO" id="GO:0019904">
    <property type="term" value="F:protein domain specific binding"/>
    <property type="evidence" value="ECO:0000315"/>
    <property type="project" value="RGD"/>
</dbReference>
<dbReference type="GO" id="GO:0003723">
    <property type="term" value="F:RNA binding"/>
    <property type="evidence" value="ECO:0000250"/>
    <property type="project" value="UniProtKB"/>
</dbReference>
<dbReference type="GO" id="GO:0070063">
    <property type="term" value="F:RNA polymerase binding"/>
    <property type="evidence" value="ECO:0000353"/>
    <property type="project" value="UniProtKB"/>
</dbReference>
<dbReference type="GO" id="GO:0043175">
    <property type="term" value="F:RNA polymerase core enzyme binding"/>
    <property type="evidence" value="ECO:0000266"/>
    <property type="project" value="RGD"/>
</dbReference>
<dbReference type="GO" id="GO:1990269">
    <property type="term" value="F:RNA polymerase II C-terminal domain phosphoserine binding"/>
    <property type="evidence" value="ECO:0000250"/>
    <property type="project" value="UniProtKB"/>
</dbReference>
<dbReference type="GO" id="GO:0000993">
    <property type="term" value="F:RNA polymerase II complex binding"/>
    <property type="evidence" value="ECO:0000318"/>
    <property type="project" value="GO_Central"/>
</dbReference>
<dbReference type="GO" id="GO:0006397">
    <property type="term" value="P:mRNA processing"/>
    <property type="evidence" value="ECO:0000315"/>
    <property type="project" value="RGD"/>
</dbReference>
<dbReference type="GO" id="GO:2000805">
    <property type="term" value="P:negative regulation of termination of RNA polymerase II transcription, poly(A)-coupled"/>
    <property type="evidence" value="ECO:0000250"/>
    <property type="project" value="UniProtKB"/>
</dbReference>
<dbReference type="GO" id="GO:0032786">
    <property type="term" value="P:positive regulation of DNA-templated transcription, elongation"/>
    <property type="evidence" value="ECO:0000250"/>
    <property type="project" value="UniProtKB"/>
</dbReference>
<dbReference type="GO" id="GO:0006369">
    <property type="term" value="P:termination of RNA polymerase II transcription"/>
    <property type="evidence" value="ECO:0000318"/>
    <property type="project" value="GO_Central"/>
</dbReference>
<dbReference type="GO" id="GO:0006366">
    <property type="term" value="P:transcription by RNA polymerase II"/>
    <property type="evidence" value="ECO:0000315"/>
    <property type="project" value="RGD"/>
</dbReference>
<dbReference type="CDD" id="cd17004">
    <property type="entry name" value="CID_SCAF8"/>
    <property type="match status" value="1"/>
</dbReference>
<dbReference type="CDD" id="cd12462">
    <property type="entry name" value="RRM_SCAF8"/>
    <property type="match status" value="1"/>
</dbReference>
<dbReference type="FunFam" id="1.25.40.90:FF:000004">
    <property type="entry name" value="splicing factor, arginine/serine-rich 15"/>
    <property type="match status" value="1"/>
</dbReference>
<dbReference type="FunFam" id="3.30.70.330:FF:000094">
    <property type="entry name" value="SR-related CTD associated factor 8"/>
    <property type="match status" value="1"/>
</dbReference>
<dbReference type="Gene3D" id="1.25.40.90">
    <property type="match status" value="1"/>
</dbReference>
<dbReference type="Gene3D" id="3.30.70.330">
    <property type="match status" value="1"/>
</dbReference>
<dbReference type="InterPro" id="IPR006569">
    <property type="entry name" value="CID_dom"/>
</dbReference>
<dbReference type="InterPro" id="IPR008942">
    <property type="entry name" value="ENTH_VHS"/>
</dbReference>
<dbReference type="InterPro" id="IPR012677">
    <property type="entry name" value="Nucleotide-bd_a/b_plait_sf"/>
</dbReference>
<dbReference type="InterPro" id="IPR035979">
    <property type="entry name" value="RBD_domain_sf"/>
</dbReference>
<dbReference type="InterPro" id="IPR000504">
    <property type="entry name" value="RRM_dom"/>
</dbReference>
<dbReference type="InterPro" id="IPR034370">
    <property type="entry name" value="SCAF8_RRM"/>
</dbReference>
<dbReference type="InterPro" id="IPR051485">
    <property type="entry name" value="SR-CTD_assoc_factor"/>
</dbReference>
<dbReference type="PANTHER" id="PTHR23140">
    <property type="entry name" value="RNA PROCESSING PROTEIN LD23810P"/>
    <property type="match status" value="1"/>
</dbReference>
<dbReference type="PANTHER" id="PTHR23140:SF1">
    <property type="entry name" value="SR-RELATED CTD ASSOCIATED FACTOR 8"/>
    <property type="match status" value="1"/>
</dbReference>
<dbReference type="Pfam" id="PF04818">
    <property type="entry name" value="CID"/>
    <property type="match status" value="1"/>
</dbReference>
<dbReference type="Pfam" id="PF00076">
    <property type="entry name" value="RRM_1"/>
    <property type="match status" value="1"/>
</dbReference>
<dbReference type="SMART" id="SM00582">
    <property type="entry name" value="RPR"/>
    <property type="match status" value="1"/>
</dbReference>
<dbReference type="SMART" id="SM00360">
    <property type="entry name" value="RRM"/>
    <property type="match status" value="1"/>
</dbReference>
<dbReference type="SUPFAM" id="SSF48464">
    <property type="entry name" value="ENTH/VHS domain"/>
    <property type="match status" value="1"/>
</dbReference>
<dbReference type="SUPFAM" id="SSF54928">
    <property type="entry name" value="RNA-binding domain, RBD"/>
    <property type="match status" value="1"/>
</dbReference>
<dbReference type="PROSITE" id="PS51391">
    <property type="entry name" value="CID"/>
    <property type="match status" value="1"/>
</dbReference>
<dbReference type="PROSITE" id="PS50102">
    <property type="entry name" value="RRM"/>
    <property type="match status" value="1"/>
</dbReference>
<comment type="function">
    <text evidence="2">Anti-terminator protein required to prevent early mRNA termination during transcription. Together with SCAF4, acts by suppressing the use of early, alternative poly(A) sites, thereby preventing the accumulation of non-functional truncated proteins. Mechanistically, associates with the phosphorylated C-terminal heptapeptide repeat domain (CTD) of the largest RNA polymerase II subunit (POLR2A), and subsequently binds nascent RNA upstream of early polyadenylation sites to prevent premature mRNA transcript cleavage and polyadenylation. Independently of SCAF4, also acts as a positive regulator of transcript elongation.</text>
</comment>
<comment type="subunit">
    <text evidence="2 6 7">Interacts with POLR2A; via C-terminal heptapeptide repeat domain (CTD) phosphorylated at 'Ser-2' and 'Ser-5' (PubMed:8692929, PubMed:9528809). Identified in a complex with CDC5L and other spliceosomal proteins (By similarity).</text>
</comment>
<comment type="subcellular location">
    <subcellularLocation>
        <location evidence="7">Nucleus</location>
    </subcellularLocation>
    <subcellularLocation>
        <location evidence="7">Nucleus matrix</location>
    </subcellularLocation>
    <text evidence="2">Detected in granular nuclear foci which correspond to sites of active transcription.</text>
</comment>
<gene>
    <name evidence="8 10" type="primary">Scaf8</name>
    <name evidence="10" type="synonym">Rbm16</name>
</gene>
<proteinExistence type="evidence at protein level"/>
<sequence length="1268" mass="139504">MEAVKTFNSELYSLNDYKPPISKAKMTQITKAAIKAIKFYKHVVQSVEKFIQKCKPEYKVPGLYVIDSIVRQSRHQVGQEKDVCAPRFSNNIISTFQNLYRCPGDDKSKIVRVLNLWQKNNVFKSEIIQPLLDMAAGIPPPVVTPVLASTTVAMSNTPGTPVTPVTPANVVQGLPDPWVSQITNTDTLAAVAQILQSPQGQQLQQLIQTLQIQQQKPQPSILQALDAGLVVQLQALTAQLTAAAAAANTLTPLDQGVSFNKKLMDRFDFGEDSEHSEESKKEIPTPQLSHVSESVNNSIFHQIAEQLQQQNLEQLRQQLLEQQQPQKVTPQDSQEGAFGSEHSASPSQGSSQQHFLEPEANLDDSIDIQQQDMDIDEGQDVVEEEIFEPEAKKVAVRSRSRTHSRSRSRSPRKRRSRSRSGSRKRKHRKRSRSRSRERKRKSSRSYSSERRAREREKERQKKGLPPVRSKTLSVCSTTLWVGQVDKKATQQDLTNLFEEFGQIESINMIPPRGCAYVCMVHRQDSFRALQKLSSGSYKIGSKVIKIAWALNKGVKTEYKQFWDVDLGVTYIPWEKVKVDDLDGFAEGGMIDQETVNAEWETVKTSEPVKETVQTTQSPAAVEKETVVTTQSEVFPPPVTMLQIPVAPTVPAVSLVPPAFPVSMPVPPPGFSPIPPPPFLRASFNPSQPPPGFMPPPVPPPVVPPPAIPPVVPTSLVQPPLSMTPETVKDVGFGSLVLPGGSVAGNLAPSTLPAGNVFNPPSKAEPEEKVPHLTEHQIPSGENTRPVIPSDIPSSAPMLAQPPGASNTSGILCVQRPNVSSNSEILGVRPANVSNSAAIMGAQPPNMLNNSGILGIQPPNVSSGSGLLGVLPPNLPNNSGLVGLQPPNVTNPAGLLGTQPPIGPQNLPPLTIPAQRMPALPMLDIRPGLIAQAPGPRFPLLQPGIPPQRGIPPPSVLDAALHPPPRGPFPPGDLFSQPERPFLAPGRPNIDSVPNPDKRIPLGNDNIQQEGDRDYRFPPIETREGINRPPPVDVRDVVGRPIDPREGPGRPPLDGRDHFGRPPVDMRETLVRPGLDHLGRRDHFGFPPEKPWGPRDFDEREHRVLPVFGGPKGLHEERGRFRAGNYRFDPRSGPWNRGFGQEVHRDFDDRRRPWERQRDRDDRDFDFCREINGNRLGRDRIQNTWVPPPHARVFDYFEGATSQRKGENVPQVNGGNTERHAPPPPLPVQKDPELYEKLASSGDADKEESGTAAGVESEAVVESTETEGT</sequence>
<protein>
    <recommendedName>
        <fullName evidence="8">SR-related and CTD-associated factor 8</fullName>
    </recommendedName>
    <alternativeName>
        <fullName evidence="9">RNA-binding motif protein 16</fullName>
    </alternativeName>
</protein>
<feature type="chain" id="PRO_0000394195" description="SR-related and CTD-associated factor 8">
    <location>
        <begin position="1"/>
        <end position="1268"/>
    </location>
</feature>
<feature type="domain" description="CID" evidence="4">
    <location>
        <begin position="1"/>
        <end position="139"/>
    </location>
</feature>
<feature type="domain" description="RRM" evidence="3">
    <location>
        <begin position="477"/>
        <end position="551"/>
    </location>
</feature>
<feature type="region of interest" description="Disordered" evidence="5">
    <location>
        <begin position="322"/>
        <end position="355"/>
    </location>
</feature>
<feature type="region of interest" description="Disordered" evidence="5">
    <location>
        <begin position="385"/>
        <end position="469"/>
    </location>
</feature>
<feature type="region of interest" description="Disordered" evidence="5">
    <location>
        <begin position="753"/>
        <end position="808"/>
    </location>
</feature>
<feature type="region of interest" description="Disordered" evidence="5">
    <location>
        <begin position="947"/>
        <end position="1063"/>
    </location>
</feature>
<feature type="region of interest" description="Disordered" evidence="5">
    <location>
        <begin position="1199"/>
        <end position="1268"/>
    </location>
</feature>
<feature type="compositionally biased region" description="Polar residues" evidence="5">
    <location>
        <begin position="342"/>
        <end position="354"/>
    </location>
</feature>
<feature type="compositionally biased region" description="Basic residues" evidence="5">
    <location>
        <begin position="394"/>
        <end position="443"/>
    </location>
</feature>
<feature type="compositionally biased region" description="Basic and acidic residues" evidence="5">
    <location>
        <begin position="447"/>
        <end position="461"/>
    </location>
</feature>
<feature type="compositionally biased region" description="Basic and acidic residues" evidence="5">
    <location>
        <begin position="763"/>
        <end position="774"/>
    </location>
</feature>
<feature type="compositionally biased region" description="Pro residues" evidence="5">
    <location>
        <begin position="961"/>
        <end position="970"/>
    </location>
</feature>
<feature type="compositionally biased region" description="Basic and acidic residues" evidence="5">
    <location>
        <begin position="1009"/>
        <end position="1025"/>
    </location>
</feature>
<feature type="compositionally biased region" description="Basic and acidic residues" evidence="5">
    <location>
        <begin position="1032"/>
        <end position="1063"/>
    </location>
</feature>
<feature type="compositionally biased region" description="Low complexity" evidence="5">
    <location>
        <begin position="1249"/>
        <end position="1262"/>
    </location>
</feature>
<feature type="modified residue" description="Phosphothreonine" evidence="2">
    <location>
        <position position="6"/>
    </location>
</feature>
<feature type="modified residue" description="Phosphoserine" evidence="2">
    <location>
        <position position="273"/>
    </location>
</feature>
<feature type="modified residue" description="Phosphothreonine" evidence="2">
    <location>
        <position position="615"/>
    </location>
</feature>
<feature type="modified residue" description="Phosphoserine" evidence="11">
    <location>
        <position position="617"/>
    </location>
</feature>
<feature type="modified residue" description="Asymmetric dimethylarginine" evidence="2">
    <location>
        <position position="915"/>
    </location>
</feature>
<feature type="modified residue" description="Asymmetric dimethylarginine" evidence="2">
    <location>
        <position position="925"/>
    </location>
</feature>
<feature type="modified residue" description="Asymmetric dimethylarginine" evidence="2">
    <location>
        <position position="936"/>
    </location>
</feature>
<feature type="modified residue" description="Asymmetric dimethylarginine" evidence="1">
    <location>
        <position position="1071"/>
    </location>
</feature>
<feature type="cross-link" description="Glycyl lysine isopeptide (Lys-Gly) (interchain with G-Cter in SUMO1)" evidence="2">
    <location>
        <position position="18"/>
    </location>
</feature>
<evidence type="ECO:0000250" key="1">
    <source>
        <dbReference type="UniProtKB" id="Q6DID3"/>
    </source>
</evidence>
<evidence type="ECO:0000250" key="2">
    <source>
        <dbReference type="UniProtKB" id="Q9UPN6"/>
    </source>
</evidence>
<evidence type="ECO:0000255" key="3">
    <source>
        <dbReference type="PROSITE-ProRule" id="PRU00176"/>
    </source>
</evidence>
<evidence type="ECO:0000255" key="4">
    <source>
        <dbReference type="PROSITE-ProRule" id="PRU00724"/>
    </source>
</evidence>
<evidence type="ECO:0000256" key="5">
    <source>
        <dbReference type="SAM" id="MobiDB-lite"/>
    </source>
</evidence>
<evidence type="ECO:0000269" key="6">
    <source>
    </source>
</evidence>
<evidence type="ECO:0000269" key="7">
    <source>
    </source>
</evidence>
<evidence type="ECO:0000303" key="8">
    <source>
    </source>
</evidence>
<evidence type="ECO:0000305" key="9"/>
<evidence type="ECO:0000312" key="10">
    <source>
        <dbReference type="RGD" id="708362"/>
    </source>
</evidence>
<evidence type="ECO:0007744" key="11">
    <source>
    </source>
</evidence>